<dbReference type="EMBL" id="AE016828">
    <property type="protein sequence ID" value="AAO90418.1"/>
    <property type="molecule type" value="Genomic_DNA"/>
</dbReference>
<dbReference type="RefSeq" id="NP_819904.1">
    <property type="nucleotide sequence ID" value="NC_002971.4"/>
</dbReference>
<dbReference type="RefSeq" id="WP_010957868.1">
    <property type="nucleotide sequence ID" value="NZ_CCYB01000044.1"/>
</dbReference>
<dbReference type="STRING" id="227377.CBU_0888"/>
<dbReference type="EnsemblBacteria" id="AAO90418">
    <property type="protein sequence ID" value="AAO90418"/>
    <property type="gene ID" value="CBU_0888"/>
</dbReference>
<dbReference type="GeneID" id="1208781"/>
<dbReference type="KEGG" id="cbu:CBU_0888"/>
<dbReference type="PATRIC" id="fig|227377.7.peg.875"/>
<dbReference type="eggNOG" id="COG1495">
    <property type="taxonomic scope" value="Bacteria"/>
</dbReference>
<dbReference type="HOGENOM" id="CLU_128688_0_0_6"/>
<dbReference type="OrthoDB" id="158402at2"/>
<dbReference type="Proteomes" id="UP000002671">
    <property type="component" value="Chromosome"/>
</dbReference>
<dbReference type="GO" id="GO:0005886">
    <property type="term" value="C:plasma membrane"/>
    <property type="evidence" value="ECO:0007669"/>
    <property type="project" value="UniProtKB-SubCell"/>
</dbReference>
<dbReference type="GO" id="GO:0015035">
    <property type="term" value="F:protein-disulfide reductase activity"/>
    <property type="evidence" value="ECO:0007669"/>
    <property type="project" value="UniProtKB-UniRule"/>
</dbReference>
<dbReference type="GO" id="GO:0006457">
    <property type="term" value="P:protein folding"/>
    <property type="evidence" value="ECO:0007669"/>
    <property type="project" value="InterPro"/>
</dbReference>
<dbReference type="Gene3D" id="1.20.1550.10">
    <property type="entry name" value="DsbB-like"/>
    <property type="match status" value="1"/>
</dbReference>
<dbReference type="HAMAP" id="MF_00287">
    <property type="entry name" value="BdbC"/>
    <property type="match status" value="1"/>
</dbReference>
<dbReference type="InterPro" id="IPR003752">
    <property type="entry name" value="DiS_bond_form_DsbB/BdbC"/>
</dbReference>
<dbReference type="InterPro" id="IPR012187">
    <property type="entry name" value="Disulphide_bond_form_BdbC"/>
</dbReference>
<dbReference type="InterPro" id="IPR023380">
    <property type="entry name" value="DsbB-like_sf"/>
</dbReference>
<dbReference type="PANTHER" id="PTHR43469">
    <property type="entry name" value="DISULFIDE FORMATION PROTEIN-RELATED"/>
    <property type="match status" value="1"/>
</dbReference>
<dbReference type="PANTHER" id="PTHR43469:SF1">
    <property type="entry name" value="SPBETA PROPHAGE-DERIVED DISULFIDE BOND FORMATION PROTEIN B"/>
    <property type="match status" value="1"/>
</dbReference>
<dbReference type="Pfam" id="PF02600">
    <property type="entry name" value="DsbB"/>
    <property type="match status" value="1"/>
</dbReference>
<dbReference type="PIRSF" id="PIRSF036659">
    <property type="entry name" value="BdbC"/>
    <property type="match status" value="1"/>
</dbReference>
<dbReference type="SUPFAM" id="SSF158442">
    <property type="entry name" value="DsbB-like"/>
    <property type="match status" value="1"/>
</dbReference>
<protein>
    <recommendedName>
        <fullName evidence="1">Probable disulfide formation protein</fullName>
    </recommendedName>
    <alternativeName>
        <fullName evidence="1">Disulfide oxidoreductase</fullName>
    </alternativeName>
    <alternativeName>
        <fullName evidence="1">Thiol-disulfide oxidoreductase</fullName>
    </alternativeName>
</protein>
<accession>Q83D55</accession>
<keyword id="KW-0997">Cell inner membrane</keyword>
<keyword id="KW-1003">Cell membrane</keyword>
<keyword id="KW-0143">Chaperone</keyword>
<keyword id="KW-1015">Disulfide bond</keyword>
<keyword id="KW-0249">Electron transport</keyword>
<keyword id="KW-0472">Membrane</keyword>
<keyword id="KW-0560">Oxidoreductase</keyword>
<keyword id="KW-0676">Redox-active center</keyword>
<keyword id="KW-1185">Reference proteome</keyword>
<keyword id="KW-0812">Transmembrane</keyword>
<keyword id="KW-1133">Transmembrane helix</keyword>
<keyword id="KW-0813">Transport</keyword>
<reference key="1">
    <citation type="journal article" date="2003" name="Proc. Natl. Acad. Sci. U.S.A.">
        <title>Complete genome sequence of the Q-fever pathogen, Coxiella burnetii.</title>
        <authorList>
            <person name="Seshadri R."/>
            <person name="Paulsen I.T."/>
            <person name="Eisen J.A."/>
            <person name="Read T.D."/>
            <person name="Nelson K.E."/>
            <person name="Nelson W.C."/>
            <person name="Ward N.L."/>
            <person name="Tettelin H."/>
            <person name="Davidsen T.M."/>
            <person name="Beanan M.J."/>
            <person name="DeBoy R.T."/>
            <person name="Daugherty S.C."/>
            <person name="Brinkac L.M."/>
            <person name="Madupu R."/>
            <person name="Dodson R.J."/>
            <person name="Khouri H.M."/>
            <person name="Lee K.H."/>
            <person name="Carty H.A."/>
            <person name="Scanlan D."/>
            <person name="Heinzen R.A."/>
            <person name="Thompson H.A."/>
            <person name="Samuel J.E."/>
            <person name="Fraser C.M."/>
            <person name="Heidelberg J.F."/>
        </authorList>
    </citation>
    <scope>NUCLEOTIDE SEQUENCE [LARGE SCALE GENOMIC DNA]</scope>
    <source>
        <strain>RSA 493 / Nine Mile phase I</strain>
    </source>
</reference>
<gene>
    <name type="ordered locus">CBU_0888</name>
</gene>
<organism>
    <name type="scientific">Coxiella burnetii (strain RSA 493 / Nine Mile phase I)</name>
    <dbReference type="NCBI Taxonomy" id="227377"/>
    <lineage>
        <taxon>Bacteria</taxon>
        <taxon>Pseudomonadati</taxon>
        <taxon>Pseudomonadota</taxon>
        <taxon>Gammaproteobacteria</taxon>
        <taxon>Legionellales</taxon>
        <taxon>Coxiellaceae</taxon>
        <taxon>Coxiella</taxon>
    </lineage>
</organism>
<comment type="function">
    <text evidence="1">Required for disulfide bond formation in some proteins.</text>
</comment>
<comment type="subcellular location">
    <subcellularLocation>
        <location evidence="1">Cell inner membrane</location>
        <topology evidence="1">Multi-pass membrane protein</topology>
    </subcellularLocation>
</comment>
<comment type="similarity">
    <text evidence="1">Belongs to the DsbB family. BdbC subfamily.</text>
</comment>
<feature type="chain" id="PRO_0000059383" description="Probable disulfide formation protein">
    <location>
        <begin position="1"/>
        <end position="147"/>
    </location>
</feature>
<feature type="transmembrane region" description="Helical" evidence="1">
    <location>
        <begin position="9"/>
        <end position="28"/>
    </location>
</feature>
<feature type="transmembrane region" description="Helical" evidence="1">
    <location>
        <begin position="43"/>
        <end position="62"/>
    </location>
</feature>
<feature type="transmembrane region" description="Helical" evidence="1">
    <location>
        <begin position="69"/>
        <end position="86"/>
    </location>
</feature>
<feature type="transmembrane region" description="Helical" evidence="1">
    <location>
        <begin position="115"/>
        <end position="139"/>
    </location>
</feature>
<feature type="disulfide bond" description="Redox-active" evidence="1">
    <location>
        <begin position="38"/>
        <end position="41"/>
    </location>
</feature>
<feature type="disulfide bond" description="Redox-active" evidence="1">
    <location>
        <begin position="99"/>
        <end position="106"/>
    </location>
</feature>
<evidence type="ECO:0000255" key="1">
    <source>
        <dbReference type="HAMAP-Rule" id="MF_00287"/>
    </source>
</evidence>
<name>BDBC_COXBU</name>
<proteinExistence type="inferred from homology"/>
<sequence>MMVSRLLKNYSLYFAWLTALIATLGSLYLSLVRHIPVCDLCWYQRVCIYPLTILLGIAAYRTDRGVVKYALPLVVLGFLFSVYQYLQQMIPGFAPINLCGSTSPHCSEIHWEIFGFITLPFLGMLATLIMSFFLIMAFYSLDKRLAN</sequence>